<sequence length="1141" mass="130297">MATVKNLRIGKSPNRLIQDLDVFDSPSAGWNDPWSPHSSRYHWQLHSNLGESAVFDENDFWCVCQKTRKHLHVKVRRDRGKPLIEEPEENYGIKDRIPVYYEEEELPEPHVTSPTKSEFATTSTCMKWSSKTTKSEIEVEWRDSYLDANCIKEIIDSRRPSFASLLTKKSSSHQGSSHSSQPSLFTTFTSLELFLRNVLVHNDQRAISAAPEGTFERHVGKGRQIQSLMKSLLFEYHHENVNYVPTIADAPLTDEQKLNLYLARNELIVLANHFRDTKEDPAIVANPFPVRLARPALINAFGVPNYDSVVPMYTTVFRDNSASLPDDPAFIALGITNDYPDSFVRYFYEEQKKNDEANVRVYADALAHIYNLRKSSFLRDLIAADRKNGIVSSDVIQAAYSSLGLEAEVGPDYRYSQEKIFEAFHSALLRKPEFARAIRNDLETIGYARKSSEILNYVLSTEQAFYTVNEAYQWLGIKSNTEDAMVASVALVKFEDDSDKAIEAVKWIAEERNSSILYDFLASQGRPSNKKPKEVPMDEDLAYNTLGVQDRALSDDVLINVYGFAVEDHPEQSDTLRAALKCIGEVRNSRLITHYLEHGNLDIPPEVSSLDTPIGLENTGNLCYLNSLIQYYFIIKPLRNAILDIDENKDLNMIENKEAVKKVGGRIVTRIEFLRALQFTYELRKLFIELITSKSSSVHPSSVLTYLALIPLTLDQVKSGTSSVMDLSSSRELSNLNERSITIDPRAEEQAQGLEQEQGQDEAKSPAEQSSSVNLIDFPMANTNGESQTQPHYFEVSEEEINSSMDLGRQQDVLECIDHVLFQLEASLGRISNSEDRLGSDNDLIRRLFSGKLKQTLNDASQGVRSNYEIFSHLIVDLFEEKQTLYDALDGVFETVNIDMGSETAQRSLCITELPIILQLQIQRVQFDRTTGQPFKSNAFVEFGKELSMDRYVEDTDGKMAPLLQRYWDLKREIINLQKRQQLLLTTNSNLMSSVDTLSILSKWAAQQQDSRLPINPKLPDILQEEINNVVAEVDMLKKQEASLKEERTHLFDNYISHSYDLLAVFVHRGQASFGHYWTYIHDFENNVYRKYNDEYVTVVDESEIFADTTGNNANPYMLTYIRKEYRHIIECVHREHNLLL</sequence>
<comment type="catalytic activity">
    <reaction>
        <text>Thiol-dependent hydrolysis of ester, thioester, amide, peptide and isopeptide bonds formed by the C-terminal Gly of ubiquitin (a 76-residue protein attached to proteins as an intracellular targeting signal).</text>
        <dbReference type="EC" id="3.4.19.12"/>
    </reaction>
</comment>
<comment type="similarity">
    <text evidence="5">Belongs to the peptidase C19 family.</text>
</comment>
<dbReference type="EC" id="3.4.19.12"/>
<dbReference type="EMBL" id="CU329670">
    <property type="protein sequence ID" value="CAB96001.1"/>
    <property type="molecule type" value="Genomic_DNA"/>
</dbReference>
<dbReference type="RefSeq" id="NP_594208.1">
    <property type="nucleotide sequence ID" value="NM_001019631.2"/>
</dbReference>
<dbReference type="BioGRID" id="278537">
    <property type="interactions" value="152"/>
</dbReference>
<dbReference type="FunCoup" id="Q9P3U0">
    <property type="interactions" value="48"/>
</dbReference>
<dbReference type="STRING" id="284812.Q9P3U0"/>
<dbReference type="MEROPS" id="C19.A56"/>
<dbReference type="iPTMnet" id="Q9P3U0"/>
<dbReference type="PaxDb" id="4896-SPAC328.06.1"/>
<dbReference type="EnsemblFungi" id="SPAC328.06.1">
    <property type="protein sequence ID" value="SPAC328.06.1:pep"/>
    <property type="gene ID" value="SPAC328.06"/>
</dbReference>
<dbReference type="GeneID" id="2542059"/>
<dbReference type="KEGG" id="spo:2542059"/>
<dbReference type="PomBase" id="SPAC328.06">
    <property type="gene designation" value="ubp2"/>
</dbReference>
<dbReference type="VEuPathDB" id="FungiDB:SPAC328.06"/>
<dbReference type="eggNOG" id="KOG1863">
    <property type="taxonomic scope" value="Eukaryota"/>
</dbReference>
<dbReference type="HOGENOM" id="CLU_003155_0_0_1"/>
<dbReference type="InParanoid" id="Q9P3U0"/>
<dbReference type="OMA" id="MDIGDAY"/>
<dbReference type="PhylomeDB" id="Q9P3U0"/>
<dbReference type="PRO" id="PR:Q9P3U0"/>
<dbReference type="Proteomes" id="UP000002485">
    <property type="component" value="Chromosome I"/>
</dbReference>
<dbReference type="GO" id="GO:0005737">
    <property type="term" value="C:cytoplasm"/>
    <property type="evidence" value="ECO:0007005"/>
    <property type="project" value="PomBase"/>
</dbReference>
<dbReference type="GO" id="GO:0005829">
    <property type="term" value="C:cytosol"/>
    <property type="evidence" value="ECO:0007005"/>
    <property type="project" value="PomBase"/>
</dbReference>
<dbReference type="GO" id="GO:0004843">
    <property type="term" value="F:cysteine-type deubiquitinase activity"/>
    <property type="evidence" value="ECO:0000318"/>
    <property type="project" value="GO_Central"/>
</dbReference>
<dbReference type="GO" id="GO:0061578">
    <property type="term" value="F:K63-linked deubiquitinase activity"/>
    <property type="evidence" value="ECO:0000314"/>
    <property type="project" value="PomBase"/>
</dbReference>
<dbReference type="GO" id="GO:0140492">
    <property type="term" value="F:metal-dependent deubiquitinase activity"/>
    <property type="evidence" value="ECO:0007005"/>
    <property type="project" value="PomBase"/>
</dbReference>
<dbReference type="GO" id="GO:0070628">
    <property type="term" value="F:proteasome binding"/>
    <property type="evidence" value="ECO:0000318"/>
    <property type="project" value="GO_Central"/>
</dbReference>
<dbReference type="GO" id="GO:1904293">
    <property type="term" value="P:negative regulation of ERAD pathway"/>
    <property type="evidence" value="ECO:0000318"/>
    <property type="project" value="GO_Central"/>
</dbReference>
<dbReference type="GO" id="GO:0043161">
    <property type="term" value="P:proteasome-mediated ubiquitin-dependent protein catabolic process"/>
    <property type="evidence" value="ECO:0007669"/>
    <property type="project" value="InterPro"/>
</dbReference>
<dbReference type="GO" id="GO:0016579">
    <property type="term" value="P:protein deubiquitination"/>
    <property type="evidence" value="ECO:0007669"/>
    <property type="project" value="InterPro"/>
</dbReference>
<dbReference type="GO" id="GO:0043162">
    <property type="term" value="P:ubiquitin-dependent protein catabolic process via the multivesicular body sorting pathway"/>
    <property type="evidence" value="ECO:0000266"/>
    <property type="project" value="PomBase"/>
</dbReference>
<dbReference type="CDD" id="cd02666">
    <property type="entry name" value="Peptidase_C19J"/>
    <property type="match status" value="1"/>
</dbReference>
<dbReference type="Gene3D" id="3.90.70.10">
    <property type="entry name" value="Cysteine proteinases"/>
    <property type="match status" value="1"/>
</dbReference>
<dbReference type="InterPro" id="IPR038765">
    <property type="entry name" value="Papain-like_cys_pep_sf"/>
</dbReference>
<dbReference type="InterPro" id="IPR001394">
    <property type="entry name" value="Peptidase_C19_UCH"/>
</dbReference>
<dbReference type="InterPro" id="IPR044635">
    <property type="entry name" value="UBP14-like"/>
</dbReference>
<dbReference type="InterPro" id="IPR025305">
    <property type="entry name" value="UCH_repeat_domain"/>
</dbReference>
<dbReference type="InterPro" id="IPR018200">
    <property type="entry name" value="USP_CS"/>
</dbReference>
<dbReference type="InterPro" id="IPR028889">
    <property type="entry name" value="USP_dom"/>
</dbReference>
<dbReference type="PANTHER" id="PTHR43982">
    <property type="entry name" value="UBIQUITIN CARBOXYL-TERMINAL HYDROLASE"/>
    <property type="match status" value="1"/>
</dbReference>
<dbReference type="PANTHER" id="PTHR43982:SF6">
    <property type="entry name" value="UBIQUITIN CARBOXYL-TERMINAL HYDROLASE 2-RELATED"/>
    <property type="match status" value="1"/>
</dbReference>
<dbReference type="Pfam" id="PF13446">
    <property type="entry name" value="RPT"/>
    <property type="match status" value="4"/>
</dbReference>
<dbReference type="Pfam" id="PF00443">
    <property type="entry name" value="UCH"/>
    <property type="match status" value="1"/>
</dbReference>
<dbReference type="SUPFAM" id="SSF54001">
    <property type="entry name" value="Cysteine proteinases"/>
    <property type="match status" value="1"/>
</dbReference>
<dbReference type="PROSITE" id="PS00972">
    <property type="entry name" value="USP_1"/>
    <property type="match status" value="1"/>
</dbReference>
<dbReference type="PROSITE" id="PS00973">
    <property type="entry name" value="USP_2"/>
    <property type="match status" value="1"/>
</dbReference>
<dbReference type="PROSITE" id="PS50235">
    <property type="entry name" value="USP_3"/>
    <property type="match status" value="1"/>
</dbReference>
<protein>
    <recommendedName>
        <fullName>Probable ubiquitin carboxyl-terminal hydrolase 2</fullName>
        <ecNumber>3.4.19.12</ecNumber>
    </recommendedName>
    <alternativeName>
        <fullName>Deubiquitinating enzyme 2</fullName>
    </alternativeName>
    <alternativeName>
        <fullName>Ubiquitin thioesterase 2</fullName>
    </alternativeName>
    <alternativeName>
        <fullName>Ubiquitin-specific-processing protease 2</fullName>
    </alternativeName>
</protein>
<accession>Q9P3U0</accession>
<keyword id="KW-0378">Hydrolase</keyword>
<keyword id="KW-0597">Phosphoprotein</keyword>
<keyword id="KW-0645">Protease</keyword>
<keyword id="KW-1185">Reference proteome</keyword>
<keyword id="KW-0788">Thiol protease</keyword>
<keyword id="KW-0833">Ubl conjugation pathway</keyword>
<gene>
    <name type="primary">ubp2</name>
    <name type="ORF">SPAC328.06</name>
</gene>
<name>UBP2_SCHPO</name>
<reference key="1">
    <citation type="journal article" date="2002" name="Nature">
        <title>The genome sequence of Schizosaccharomyces pombe.</title>
        <authorList>
            <person name="Wood V."/>
            <person name="Gwilliam R."/>
            <person name="Rajandream M.A."/>
            <person name="Lyne M.H."/>
            <person name="Lyne R."/>
            <person name="Stewart A."/>
            <person name="Sgouros J.G."/>
            <person name="Peat N."/>
            <person name="Hayles J."/>
            <person name="Baker S.G."/>
            <person name="Basham D."/>
            <person name="Bowman S."/>
            <person name="Brooks K."/>
            <person name="Brown D."/>
            <person name="Brown S."/>
            <person name="Chillingworth T."/>
            <person name="Churcher C.M."/>
            <person name="Collins M."/>
            <person name="Connor R."/>
            <person name="Cronin A."/>
            <person name="Davis P."/>
            <person name="Feltwell T."/>
            <person name="Fraser A."/>
            <person name="Gentles S."/>
            <person name="Goble A."/>
            <person name="Hamlin N."/>
            <person name="Harris D.E."/>
            <person name="Hidalgo J."/>
            <person name="Hodgson G."/>
            <person name="Holroyd S."/>
            <person name="Hornsby T."/>
            <person name="Howarth S."/>
            <person name="Huckle E.J."/>
            <person name="Hunt S."/>
            <person name="Jagels K."/>
            <person name="James K.D."/>
            <person name="Jones L."/>
            <person name="Jones M."/>
            <person name="Leather S."/>
            <person name="McDonald S."/>
            <person name="McLean J."/>
            <person name="Mooney P."/>
            <person name="Moule S."/>
            <person name="Mungall K.L."/>
            <person name="Murphy L.D."/>
            <person name="Niblett D."/>
            <person name="Odell C."/>
            <person name="Oliver K."/>
            <person name="O'Neil S."/>
            <person name="Pearson D."/>
            <person name="Quail M.A."/>
            <person name="Rabbinowitsch E."/>
            <person name="Rutherford K.M."/>
            <person name="Rutter S."/>
            <person name="Saunders D."/>
            <person name="Seeger K."/>
            <person name="Sharp S."/>
            <person name="Skelton J."/>
            <person name="Simmonds M.N."/>
            <person name="Squares R."/>
            <person name="Squares S."/>
            <person name="Stevens K."/>
            <person name="Taylor K."/>
            <person name="Taylor R.G."/>
            <person name="Tivey A."/>
            <person name="Walsh S.V."/>
            <person name="Warren T."/>
            <person name="Whitehead S."/>
            <person name="Woodward J.R."/>
            <person name="Volckaert G."/>
            <person name="Aert R."/>
            <person name="Robben J."/>
            <person name="Grymonprez B."/>
            <person name="Weltjens I."/>
            <person name="Vanstreels E."/>
            <person name="Rieger M."/>
            <person name="Schaefer M."/>
            <person name="Mueller-Auer S."/>
            <person name="Gabel C."/>
            <person name="Fuchs M."/>
            <person name="Duesterhoeft A."/>
            <person name="Fritzc C."/>
            <person name="Holzer E."/>
            <person name="Moestl D."/>
            <person name="Hilbert H."/>
            <person name="Borzym K."/>
            <person name="Langer I."/>
            <person name="Beck A."/>
            <person name="Lehrach H."/>
            <person name="Reinhardt R."/>
            <person name="Pohl T.M."/>
            <person name="Eger P."/>
            <person name="Zimmermann W."/>
            <person name="Wedler H."/>
            <person name="Wambutt R."/>
            <person name="Purnelle B."/>
            <person name="Goffeau A."/>
            <person name="Cadieu E."/>
            <person name="Dreano S."/>
            <person name="Gloux S."/>
            <person name="Lelaure V."/>
            <person name="Mottier S."/>
            <person name="Galibert F."/>
            <person name="Aves S.J."/>
            <person name="Xiang Z."/>
            <person name="Hunt C."/>
            <person name="Moore K."/>
            <person name="Hurst S.M."/>
            <person name="Lucas M."/>
            <person name="Rochet M."/>
            <person name="Gaillardin C."/>
            <person name="Tallada V.A."/>
            <person name="Garzon A."/>
            <person name="Thode G."/>
            <person name="Daga R.R."/>
            <person name="Cruzado L."/>
            <person name="Jimenez J."/>
            <person name="Sanchez M."/>
            <person name="del Rey F."/>
            <person name="Benito J."/>
            <person name="Dominguez A."/>
            <person name="Revuelta J.L."/>
            <person name="Moreno S."/>
            <person name="Armstrong J."/>
            <person name="Forsburg S.L."/>
            <person name="Cerutti L."/>
            <person name="Lowe T."/>
            <person name="McCombie W.R."/>
            <person name="Paulsen I."/>
            <person name="Potashkin J."/>
            <person name="Shpakovski G.V."/>
            <person name="Ussery D."/>
            <person name="Barrell B.G."/>
            <person name="Nurse P."/>
        </authorList>
    </citation>
    <scope>NUCLEOTIDE SEQUENCE [LARGE SCALE GENOMIC DNA]</scope>
    <source>
        <strain>972 / ATCC 24843</strain>
    </source>
</reference>
<reference key="2">
    <citation type="journal article" date="2008" name="J. Proteome Res.">
        <title>Phosphoproteome analysis of fission yeast.</title>
        <authorList>
            <person name="Wilson-Grady J.T."/>
            <person name="Villen J."/>
            <person name="Gygi S.P."/>
        </authorList>
    </citation>
    <scope>PHOSPHORYLATION [LARGE SCALE ANALYSIS] AT THR-112; SER-113; THR-115; THR-721 AND SER-722</scope>
    <scope>IDENTIFICATION BY MASS SPECTROMETRY</scope>
</reference>
<proteinExistence type="evidence at protein level"/>
<feature type="chain" id="PRO_0000080603" description="Probable ubiquitin carboxyl-terminal hydrolase 2">
    <location>
        <begin position="1"/>
        <end position="1141"/>
    </location>
</feature>
<feature type="domain" description="USP">
    <location>
        <begin position="614"/>
        <end position="1124"/>
    </location>
</feature>
<feature type="region of interest" description="Disordered" evidence="3">
    <location>
        <begin position="748"/>
        <end position="770"/>
    </location>
</feature>
<feature type="active site" description="Nucleophile" evidence="1 2">
    <location>
        <position position="623"/>
    </location>
</feature>
<feature type="active site" description="Proton acceptor" evidence="1 2">
    <location>
        <position position="1076"/>
    </location>
</feature>
<feature type="modified residue" description="Phosphothreonine" evidence="4">
    <location>
        <position position="112"/>
    </location>
</feature>
<feature type="modified residue" description="Phosphoserine" evidence="4">
    <location>
        <position position="113"/>
    </location>
</feature>
<feature type="modified residue" description="Phosphothreonine" evidence="4">
    <location>
        <position position="115"/>
    </location>
</feature>
<feature type="modified residue" description="Phosphothreonine" evidence="4">
    <location>
        <position position="721"/>
    </location>
</feature>
<feature type="modified residue" description="Phosphoserine" evidence="4">
    <location>
        <position position="722"/>
    </location>
</feature>
<evidence type="ECO:0000255" key="1">
    <source>
        <dbReference type="PROSITE-ProRule" id="PRU10092"/>
    </source>
</evidence>
<evidence type="ECO:0000255" key="2">
    <source>
        <dbReference type="PROSITE-ProRule" id="PRU10093"/>
    </source>
</evidence>
<evidence type="ECO:0000256" key="3">
    <source>
        <dbReference type="SAM" id="MobiDB-lite"/>
    </source>
</evidence>
<evidence type="ECO:0000269" key="4">
    <source>
    </source>
</evidence>
<evidence type="ECO:0000305" key="5"/>
<organism>
    <name type="scientific">Schizosaccharomyces pombe (strain 972 / ATCC 24843)</name>
    <name type="common">Fission yeast</name>
    <dbReference type="NCBI Taxonomy" id="284812"/>
    <lineage>
        <taxon>Eukaryota</taxon>
        <taxon>Fungi</taxon>
        <taxon>Dikarya</taxon>
        <taxon>Ascomycota</taxon>
        <taxon>Taphrinomycotina</taxon>
        <taxon>Schizosaccharomycetes</taxon>
        <taxon>Schizosaccharomycetales</taxon>
        <taxon>Schizosaccharomycetaceae</taxon>
        <taxon>Schizosaccharomyces</taxon>
    </lineage>
</organism>